<organism>
    <name type="scientific">Staphylococcus aureus (strain JH1)</name>
    <dbReference type="NCBI Taxonomy" id="359787"/>
    <lineage>
        <taxon>Bacteria</taxon>
        <taxon>Bacillati</taxon>
        <taxon>Bacillota</taxon>
        <taxon>Bacilli</taxon>
        <taxon>Bacillales</taxon>
        <taxon>Staphylococcaceae</taxon>
        <taxon>Staphylococcus</taxon>
    </lineage>
</organism>
<proteinExistence type="inferred from homology"/>
<protein>
    <recommendedName>
        <fullName evidence="2">Large ribosomal subunit protein bL27</fullName>
    </recommendedName>
    <alternativeName>
        <fullName evidence="3">50S ribosomal protein L27</fullName>
    </alternativeName>
</protein>
<sequence>MLKLNLQFFASKKGVSSTKNGRDSESKRLGAKRADGQFVTGGSILYRQRGTKIYPGENVGRGGDDTLFAKIDGVVKFERKGRDKKQVSVYAVAE</sequence>
<feature type="propeptide" id="PRO_0000459929" evidence="1">
    <location>
        <begin position="1"/>
        <end position="9"/>
    </location>
</feature>
<feature type="chain" id="PRO_1000081915" description="Large ribosomal subunit protein bL27">
    <location>
        <begin position="10"/>
        <end position="94"/>
    </location>
</feature>
<name>RL27_STAA2</name>
<comment type="PTM">
    <text evidence="1">The N-terminus is cleaved by ribosomal processing cysteine protease Prp.</text>
</comment>
<comment type="similarity">
    <text evidence="2">Belongs to the bacterial ribosomal protein bL27 family.</text>
</comment>
<accession>A6U2B3</accession>
<keyword id="KW-0687">Ribonucleoprotein</keyword>
<keyword id="KW-0689">Ribosomal protein</keyword>
<dbReference type="EMBL" id="CP000736">
    <property type="protein sequence ID" value="ABR52581.1"/>
    <property type="molecule type" value="Genomic_DNA"/>
</dbReference>
<dbReference type="SMR" id="A6U2B3"/>
<dbReference type="KEGG" id="sah:SaurJH1_1735"/>
<dbReference type="HOGENOM" id="CLU_095424_4_0_9"/>
<dbReference type="GO" id="GO:0022625">
    <property type="term" value="C:cytosolic large ribosomal subunit"/>
    <property type="evidence" value="ECO:0007669"/>
    <property type="project" value="TreeGrafter"/>
</dbReference>
<dbReference type="GO" id="GO:0003735">
    <property type="term" value="F:structural constituent of ribosome"/>
    <property type="evidence" value="ECO:0007669"/>
    <property type="project" value="InterPro"/>
</dbReference>
<dbReference type="GO" id="GO:0006412">
    <property type="term" value="P:translation"/>
    <property type="evidence" value="ECO:0007669"/>
    <property type="project" value="UniProtKB-UniRule"/>
</dbReference>
<dbReference type="FunFam" id="2.40.50.100:FF:000004">
    <property type="entry name" value="50S ribosomal protein L27"/>
    <property type="match status" value="1"/>
</dbReference>
<dbReference type="Gene3D" id="2.40.50.100">
    <property type="match status" value="1"/>
</dbReference>
<dbReference type="HAMAP" id="MF_00539">
    <property type="entry name" value="Ribosomal_bL27"/>
    <property type="match status" value="1"/>
</dbReference>
<dbReference type="InterPro" id="IPR001684">
    <property type="entry name" value="Ribosomal_bL27"/>
</dbReference>
<dbReference type="InterPro" id="IPR018261">
    <property type="entry name" value="Ribosomal_bL27_CS"/>
</dbReference>
<dbReference type="NCBIfam" id="TIGR00062">
    <property type="entry name" value="L27"/>
    <property type="match status" value="1"/>
</dbReference>
<dbReference type="PANTHER" id="PTHR15893:SF0">
    <property type="entry name" value="LARGE RIBOSOMAL SUBUNIT PROTEIN BL27M"/>
    <property type="match status" value="1"/>
</dbReference>
<dbReference type="PANTHER" id="PTHR15893">
    <property type="entry name" value="RIBOSOMAL PROTEIN L27"/>
    <property type="match status" value="1"/>
</dbReference>
<dbReference type="Pfam" id="PF01016">
    <property type="entry name" value="Ribosomal_L27"/>
    <property type="match status" value="1"/>
</dbReference>
<dbReference type="PRINTS" id="PR00063">
    <property type="entry name" value="RIBOSOMALL27"/>
</dbReference>
<dbReference type="SUPFAM" id="SSF110324">
    <property type="entry name" value="Ribosomal L27 protein-like"/>
    <property type="match status" value="1"/>
</dbReference>
<dbReference type="PROSITE" id="PS00831">
    <property type="entry name" value="RIBOSOMAL_L27"/>
    <property type="match status" value="1"/>
</dbReference>
<reference key="1">
    <citation type="submission" date="2007-06" db="EMBL/GenBank/DDBJ databases">
        <title>Complete sequence of chromosome of Staphylococcus aureus subsp. aureus JH1.</title>
        <authorList>
            <consortium name="US DOE Joint Genome Institute"/>
            <person name="Copeland A."/>
            <person name="Lucas S."/>
            <person name="Lapidus A."/>
            <person name="Barry K."/>
            <person name="Detter J.C."/>
            <person name="Glavina del Rio T."/>
            <person name="Hammon N."/>
            <person name="Israni S."/>
            <person name="Dalin E."/>
            <person name="Tice H."/>
            <person name="Pitluck S."/>
            <person name="Chain P."/>
            <person name="Malfatti S."/>
            <person name="Shin M."/>
            <person name="Vergez L."/>
            <person name="Schmutz J."/>
            <person name="Larimer F."/>
            <person name="Land M."/>
            <person name="Hauser L."/>
            <person name="Kyrpides N."/>
            <person name="Ivanova N."/>
            <person name="Tomasz A."/>
            <person name="Richardson P."/>
        </authorList>
    </citation>
    <scope>NUCLEOTIDE SEQUENCE [LARGE SCALE GENOMIC DNA]</scope>
    <source>
        <strain>JH1</strain>
    </source>
</reference>
<evidence type="ECO:0000250" key="1">
    <source>
        <dbReference type="UniProtKB" id="Q2FXT0"/>
    </source>
</evidence>
<evidence type="ECO:0000255" key="2">
    <source>
        <dbReference type="HAMAP-Rule" id="MF_00539"/>
    </source>
</evidence>
<evidence type="ECO:0000305" key="3"/>
<gene>
    <name evidence="2" type="primary">rpmA</name>
    <name type="ordered locus">SaurJH1_1735</name>
</gene>